<sequence>MKVKSILSEGKQIQLATELVRLGARLQVLEVSTTLSRERLVKLYKEVKGVSPPKGMLPYSEDWFTGWQPNMHSSLFINIYNYITQYTNVRDIDAIIKSYQLYLEHIEVNHLQCILSFTRAWTLVRFVESKVLSVTSCVKCTGNFLVHSLDIQSNHVCGLCHVPSRAGKTKRAAAQKAKEAQEVEIREACAV</sequence>
<gene>
    <name evidence="1" type="primary">flhC</name>
    <name type="ordered locus">Neut_0730</name>
</gene>
<protein>
    <recommendedName>
        <fullName evidence="1">Flagellar transcriptional regulator FlhC</fullName>
    </recommendedName>
</protein>
<reference key="1">
    <citation type="journal article" date="2007" name="Environ. Microbiol.">
        <title>Whole-genome analysis of the ammonia-oxidizing bacterium, Nitrosomonas eutropha C91: implications for niche adaptation.</title>
        <authorList>
            <person name="Stein L.Y."/>
            <person name="Arp D.J."/>
            <person name="Berube P.M."/>
            <person name="Chain P.S."/>
            <person name="Hauser L."/>
            <person name="Jetten M.S."/>
            <person name="Klotz M.G."/>
            <person name="Larimer F.W."/>
            <person name="Norton J.M."/>
            <person name="Op den Camp H.J.M."/>
            <person name="Shin M."/>
            <person name="Wei X."/>
        </authorList>
    </citation>
    <scope>NUCLEOTIDE SEQUENCE [LARGE SCALE GENOMIC DNA]</scope>
    <source>
        <strain>DSM 101675 / C91 / Nm57</strain>
    </source>
</reference>
<name>FLHC_NITEC</name>
<evidence type="ECO:0000255" key="1">
    <source>
        <dbReference type="HAMAP-Rule" id="MF_01891"/>
    </source>
</evidence>
<accession>Q0AI30</accession>
<keyword id="KW-0010">Activator</keyword>
<keyword id="KW-1005">Bacterial flagellum biogenesis</keyword>
<keyword id="KW-0963">Cytoplasm</keyword>
<keyword id="KW-0238">DNA-binding</keyword>
<keyword id="KW-0479">Metal-binding</keyword>
<keyword id="KW-0804">Transcription</keyword>
<keyword id="KW-0805">Transcription regulation</keyword>
<keyword id="KW-0862">Zinc</keyword>
<dbReference type="EMBL" id="CP000450">
    <property type="protein sequence ID" value="ABI59002.1"/>
    <property type="molecule type" value="Genomic_DNA"/>
</dbReference>
<dbReference type="RefSeq" id="WP_011633827.1">
    <property type="nucleotide sequence ID" value="NC_008344.1"/>
</dbReference>
<dbReference type="SMR" id="Q0AI30"/>
<dbReference type="STRING" id="335283.Neut_0730"/>
<dbReference type="KEGG" id="net:Neut_0730"/>
<dbReference type="eggNOG" id="ENOG502Z927">
    <property type="taxonomic scope" value="Bacteria"/>
</dbReference>
<dbReference type="HOGENOM" id="CLU_122824_0_0_4"/>
<dbReference type="OrthoDB" id="5570801at2"/>
<dbReference type="Proteomes" id="UP000001966">
    <property type="component" value="Chromosome"/>
</dbReference>
<dbReference type="GO" id="GO:0005737">
    <property type="term" value="C:cytoplasm"/>
    <property type="evidence" value="ECO:0007669"/>
    <property type="project" value="UniProtKB-SubCell"/>
</dbReference>
<dbReference type="GO" id="GO:0003677">
    <property type="term" value="F:DNA binding"/>
    <property type="evidence" value="ECO:0007669"/>
    <property type="project" value="UniProtKB-UniRule"/>
</dbReference>
<dbReference type="GO" id="GO:0008270">
    <property type="term" value="F:zinc ion binding"/>
    <property type="evidence" value="ECO:0007669"/>
    <property type="project" value="UniProtKB-UniRule"/>
</dbReference>
<dbReference type="GO" id="GO:0044781">
    <property type="term" value="P:bacterial-type flagellum organization"/>
    <property type="evidence" value="ECO:0007669"/>
    <property type="project" value="UniProtKB-KW"/>
</dbReference>
<dbReference type="GO" id="GO:0045893">
    <property type="term" value="P:positive regulation of DNA-templated transcription"/>
    <property type="evidence" value="ECO:0007669"/>
    <property type="project" value="InterPro"/>
</dbReference>
<dbReference type="GO" id="GO:1902208">
    <property type="term" value="P:regulation of bacterial-type flagellum assembly"/>
    <property type="evidence" value="ECO:0007669"/>
    <property type="project" value="UniProtKB-UniRule"/>
</dbReference>
<dbReference type="HAMAP" id="MF_01891">
    <property type="entry name" value="FhlC"/>
    <property type="match status" value="1"/>
</dbReference>
<dbReference type="InterPro" id="IPR007944">
    <property type="entry name" value="FlhC"/>
</dbReference>
<dbReference type="NCBIfam" id="NF009365">
    <property type="entry name" value="PRK12722.1"/>
    <property type="match status" value="1"/>
</dbReference>
<dbReference type="Pfam" id="PF05280">
    <property type="entry name" value="FlhC"/>
    <property type="match status" value="1"/>
</dbReference>
<dbReference type="PIRSF" id="PIRSF003159">
    <property type="entry name" value="FlhC"/>
    <property type="match status" value="1"/>
</dbReference>
<dbReference type="SUPFAM" id="SSF160930">
    <property type="entry name" value="FlhC-like"/>
    <property type="match status" value="1"/>
</dbReference>
<organism>
    <name type="scientific">Nitrosomonas eutropha (strain DSM 101675 / C91 / Nm57)</name>
    <dbReference type="NCBI Taxonomy" id="335283"/>
    <lineage>
        <taxon>Bacteria</taxon>
        <taxon>Pseudomonadati</taxon>
        <taxon>Pseudomonadota</taxon>
        <taxon>Betaproteobacteria</taxon>
        <taxon>Nitrosomonadales</taxon>
        <taxon>Nitrosomonadaceae</taxon>
        <taxon>Nitrosomonas</taxon>
    </lineage>
</organism>
<comment type="function">
    <text evidence="1">Functions in complex with FlhD as a master transcriptional regulator that regulates transcription of several flagellar and non-flagellar operons by binding to their promoter region. Activates expression of class 2 flagellar genes, including fliA, which is a flagellum-specific sigma factor that turns on the class 3 genes. Also regulates genes whose products function in a variety of physiological pathways.</text>
</comment>
<comment type="cofactor">
    <cofactor evidence="1">
        <name>Zn(2+)</name>
        <dbReference type="ChEBI" id="CHEBI:29105"/>
    </cofactor>
    <text evidence="1">Binds 1 zinc ion per subunit.</text>
</comment>
<comment type="subunit">
    <text evidence="1">Heterohexamer composed of two FlhC and four FlhD subunits. Each FlhC binds a FlhD dimer, forming a heterotrimer, and a hexamer assembles by dimerization of two heterotrimers.</text>
</comment>
<comment type="subcellular location">
    <subcellularLocation>
        <location evidence="1">Cytoplasm</location>
    </subcellularLocation>
</comment>
<comment type="similarity">
    <text evidence="1">Belongs to the FlhC family.</text>
</comment>
<proteinExistence type="inferred from homology"/>
<feature type="chain" id="PRO_0000406763" description="Flagellar transcriptional regulator FlhC">
    <location>
        <begin position="1"/>
        <end position="191"/>
    </location>
</feature>
<feature type="binding site" evidence="1">
    <location>
        <position position="137"/>
    </location>
    <ligand>
        <name>Zn(2+)</name>
        <dbReference type="ChEBI" id="CHEBI:29105"/>
    </ligand>
</feature>
<feature type="binding site" evidence="1">
    <location>
        <position position="140"/>
    </location>
    <ligand>
        <name>Zn(2+)</name>
        <dbReference type="ChEBI" id="CHEBI:29105"/>
    </ligand>
</feature>
<feature type="binding site" evidence="1">
    <location>
        <position position="157"/>
    </location>
    <ligand>
        <name>Zn(2+)</name>
        <dbReference type="ChEBI" id="CHEBI:29105"/>
    </ligand>
</feature>
<feature type="binding site" evidence="1">
    <location>
        <position position="160"/>
    </location>
    <ligand>
        <name>Zn(2+)</name>
        <dbReference type="ChEBI" id="CHEBI:29105"/>
    </ligand>
</feature>